<name>NU1M_MYCMD</name>
<accession>Q0H8X5</accession>
<sequence>MFSILYNLLEILVVLVPILLSVAFMTVIERKVMGSMQRRIGPNVVGYYALLQPFADALKLVIKEQVIPSQATKSLFFLAPMVTLIFSLLGWGVIPLGPGLALSDFSLGILYSLALSSIGVYGILFAGWSANSKYAFLGSLRSTAQMISYELIYSAAVLAVILLCGTFNITEIIESQQSVWYIMPLLPIFILFFVSALAETNRTPFDLPEAESELVAGFMTEHSGMIFVFFFLAEYGSIVLMSTFTAILFLGGYNMSPQVLFAEDSFINLQSIALAVKAVLIMFLFVWIRATLPRMRYDSLMTFCWTGMLPVAIALLILVPSLLIAFDISPY</sequence>
<evidence type="ECO:0000250" key="1"/>
<evidence type="ECO:0000255" key="2"/>
<evidence type="ECO:0000305" key="3"/>
<keyword id="KW-0249">Electron transport</keyword>
<keyword id="KW-0472">Membrane</keyword>
<keyword id="KW-0496">Mitochondrion</keyword>
<keyword id="KW-0999">Mitochondrion inner membrane</keyword>
<keyword id="KW-0520">NAD</keyword>
<keyword id="KW-1185">Reference proteome</keyword>
<keyword id="KW-0679">Respiratory chain</keyword>
<keyword id="KW-1278">Translocase</keyword>
<keyword id="KW-0812">Transmembrane</keyword>
<keyword id="KW-1133">Transmembrane helix</keyword>
<keyword id="KW-0813">Transport</keyword>
<keyword id="KW-0830">Ubiquinone</keyword>
<protein>
    <recommendedName>
        <fullName>NADH-ubiquinone oxidoreductase chain 1</fullName>
        <ecNumber>7.1.1.2</ecNumber>
    </recommendedName>
    <alternativeName>
        <fullName>NADH dehydrogenase subunit 1</fullName>
    </alternativeName>
</protein>
<reference key="1">
    <citation type="submission" date="2005-08" db="EMBL/GenBank/DDBJ databases">
        <title>Annotation of mitochondrial genome of Ustilago maydis and comparative analysis of basidiomycete mtDNAs.</title>
        <authorList>
            <person name="Kennell J.C."/>
            <person name="Boehmer C."/>
        </authorList>
    </citation>
    <scope>NUCLEOTIDE SEQUENCE [LARGE SCALE GENOMIC DNA]</scope>
    <source>
        <strain>DSM 14603 / FGSC 9021 / UM521</strain>
    </source>
</reference>
<reference key="2">
    <citation type="journal article" date="2006" name="Nature">
        <title>Insights from the genome of the biotrophic fungal plant pathogen Ustilago maydis.</title>
        <authorList>
            <person name="Kaemper J."/>
            <person name="Kahmann R."/>
            <person name="Boelker M."/>
            <person name="Ma L.-J."/>
            <person name="Brefort T."/>
            <person name="Saville B.J."/>
            <person name="Banuett F."/>
            <person name="Kronstad J.W."/>
            <person name="Gold S.E."/>
            <person name="Mueller O."/>
            <person name="Perlin M.H."/>
            <person name="Woesten H.A.B."/>
            <person name="de Vries R."/>
            <person name="Ruiz-Herrera J."/>
            <person name="Reynaga-Pena C.G."/>
            <person name="Snetselaar K."/>
            <person name="McCann M."/>
            <person name="Perez-Martin J."/>
            <person name="Feldbruegge M."/>
            <person name="Basse C.W."/>
            <person name="Steinberg G."/>
            <person name="Ibeas J.I."/>
            <person name="Holloman W."/>
            <person name="Guzman P."/>
            <person name="Farman M.L."/>
            <person name="Stajich J.E."/>
            <person name="Sentandreu R."/>
            <person name="Gonzalez-Prieto J.M."/>
            <person name="Kennell J.C."/>
            <person name="Molina L."/>
            <person name="Schirawski J."/>
            <person name="Mendoza-Mendoza A."/>
            <person name="Greilinger D."/>
            <person name="Muench K."/>
            <person name="Roessel N."/>
            <person name="Scherer M."/>
            <person name="Vranes M."/>
            <person name="Ladendorf O."/>
            <person name="Vincon V."/>
            <person name="Fuchs U."/>
            <person name="Sandrock B."/>
            <person name="Meng S."/>
            <person name="Ho E.C.H."/>
            <person name="Cahill M.J."/>
            <person name="Boyce K.J."/>
            <person name="Klose J."/>
            <person name="Klosterman S.J."/>
            <person name="Deelstra H.J."/>
            <person name="Ortiz-Castellanos L."/>
            <person name="Li W."/>
            <person name="Sanchez-Alonso P."/>
            <person name="Schreier P.H."/>
            <person name="Haeuser-Hahn I."/>
            <person name="Vaupel M."/>
            <person name="Koopmann E."/>
            <person name="Friedrich G."/>
            <person name="Voss H."/>
            <person name="Schlueter T."/>
            <person name="Margolis J."/>
            <person name="Platt D."/>
            <person name="Swimmer C."/>
            <person name="Gnirke A."/>
            <person name="Chen F."/>
            <person name="Vysotskaia V."/>
            <person name="Mannhaupt G."/>
            <person name="Gueldener U."/>
            <person name="Muensterkoetter M."/>
            <person name="Haase D."/>
            <person name="Oesterheld M."/>
            <person name="Mewes H.-W."/>
            <person name="Mauceli E.W."/>
            <person name="DeCaprio D."/>
            <person name="Wade C.M."/>
            <person name="Butler J."/>
            <person name="Young S.K."/>
            <person name="Jaffe D.B."/>
            <person name="Calvo S.E."/>
            <person name="Nusbaum C."/>
            <person name="Galagan J.E."/>
            <person name="Birren B.W."/>
        </authorList>
    </citation>
    <scope>NUCLEOTIDE SEQUENCE [LARGE SCALE GENOMIC DNA]</scope>
    <source>
        <strain>DSM 14603 / FGSC 9021 / UM521</strain>
    </source>
</reference>
<comment type="function">
    <text evidence="1">Core subunit of the mitochondrial membrane respiratory chain NADH dehydrogenase (Complex I) that is believed to belong to the minimal assembly required for catalysis. Complex I functions in the transfer of electrons from NADH to the respiratory chain. The immediate electron acceptor for the enzyme is believed to be ubiquinone (By similarity).</text>
</comment>
<comment type="catalytic activity">
    <reaction>
        <text>a ubiquinone + NADH + 5 H(+)(in) = a ubiquinol + NAD(+) + 4 H(+)(out)</text>
        <dbReference type="Rhea" id="RHEA:29091"/>
        <dbReference type="Rhea" id="RHEA-COMP:9565"/>
        <dbReference type="Rhea" id="RHEA-COMP:9566"/>
        <dbReference type="ChEBI" id="CHEBI:15378"/>
        <dbReference type="ChEBI" id="CHEBI:16389"/>
        <dbReference type="ChEBI" id="CHEBI:17976"/>
        <dbReference type="ChEBI" id="CHEBI:57540"/>
        <dbReference type="ChEBI" id="CHEBI:57945"/>
        <dbReference type="EC" id="7.1.1.2"/>
    </reaction>
</comment>
<comment type="subcellular location">
    <subcellularLocation>
        <location evidence="1">Mitochondrion inner membrane</location>
        <topology evidence="1">Multi-pass membrane protein</topology>
    </subcellularLocation>
</comment>
<comment type="similarity">
    <text evidence="3">Belongs to the complex I subunit 1 family.</text>
</comment>
<gene>
    <name type="primary">ND1</name>
    <name type="synonym">NAD1</name>
</gene>
<organism>
    <name type="scientific">Mycosarcoma maydis</name>
    <name type="common">Corn smut fungus</name>
    <name type="synonym">Ustilago maydis</name>
    <dbReference type="NCBI Taxonomy" id="5270"/>
    <lineage>
        <taxon>Eukaryota</taxon>
        <taxon>Fungi</taxon>
        <taxon>Dikarya</taxon>
        <taxon>Basidiomycota</taxon>
        <taxon>Ustilaginomycotina</taxon>
        <taxon>Ustilaginomycetes</taxon>
        <taxon>Ustilaginales</taxon>
        <taxon>Ustilaginaceae</taxon>
        <taxon>Mycosarcoma</taxon>
    </lineage>
</organism>
<dbReference type="EC" id="7.1.1.2"/>
<dbReference type="EMBL" id="DQ157700">
    <property type="protein sequence ID" value="AAZ67013.1"/>
    <property type="molecule type" value="Genomic_DNA"/>
</dbReference>
<dbReference type="EMBL" id="AACP01000277">
    <property type="status" value="NOT_ANNOTATED_CDS"/>
    <property type="molecule type" value="Genomic_DNA"/>
</dbReference>
<dbReference type="RefSeq" id="YP_762697.1">
    <property type="nucleotide sequence ID" value="NC_008368.1"/>
</dbReference>
<dbReference type="SMR" id="Q0H8X5"/>
<dbReference type="STRING" id="237631.Q0H8X5"/>
<dbReference type="GeneID" id="4308278"/>
<dbReference type="InParanoid" id="Q0H8X5"/>
<dbReference type="Proteomes" id="UP000000561">
    <property type="component" value="Mitochondrion"/>
</dbReference>
<dbReference type="GO" id="GO:0005743">
    <property type="term" value="C:mitochondrial inner membrane"/>
    <property type="evidence" value="ECO:0007669"/>
    <property type="project" value="UniProtKB-SubCell"/>
</dbReference>
<dbReference type="GO" id="GO:0045271">
    <property type="term" value="C:respiratory chain complex I"/>
    <property type="evidence" value="ECO:0000318"/>
    <property type="project" value="GO_Central"/>
</dbReference>
<dbReference type="GO" id="GO:0008137">
    <property type="term" value="F:NADH dehydrogenase (ubiquinone) activity"/>
    <property type="evidence" value="ECO:0007669"/>
    <property type="project" value="UniProtKB-EC"/>
</dbReference>
<dbReference type="GO" id="GO:0009060">
    <property type="term" value="P:aerobic respiration"/>
    <property type="evidence" value="ECO:0000318"/>
    <property type="project" value="GO_Central"/>
</dbReference>
<dbReference type="HAMAP" id="MF_01350">
    <property type="entry name" value="NDH1_NuoH"/>
    <property type="match status" value="1"/>
</dbReference>
<dbReference type="InterPro" id="IPR001694">
    <property type="entry name" value="NADH_UbQ_OxRdtase_su1/FPO"/>
</dbReference>
<dbReference type="InterPro" id="IPR018086">
    <property type="entry name" value="NADH_UbQ_OxRdtase_su1_CS"/>
</dbReference>
<dbReference type="NCBIfam" id="NF004741">
    <property type="entry name" value="PRK06076.1-2"/>
    <property type="match status" value="1"/>
</dbReference>
<dbReference type="PANTHER" id="PTHR11432">
    <property type="entry name" value="NADH DEHYDROGENASE SUBUNIT 1"/>
    <property type="match status" value="1"/>
</dbReference>
<dbReference type="PANTHER" id="PTHR11432:SF3">
    <property type="entry name" value="NADH-UBIQUINONE OXIDOREDUCTASE CHAIN 1"/>
    <property type="match status" value="1"/>
</dbReference>
<dbReference type="Pfam" id="PF00146">
    <property type="entry name" value="NADHdh"/>
    <property type="match status" value="1"/>
</dbReference>
<dbReference type="PROSITE" id="PS00668">
    <property type="entry name" value="COMPLEX1_ND1_2"/>
    <property type="match status" value="1"/>
</dbReference>
<proteinExistence type="inferred from homology"/>
<feature type="chain" id="PRO_0000271145" description="NADH-ubiquinone oxidoreductase chain 1">
    <location>
        <begin position="1"/>
        <end position="331"/>
    </location>
</feature>
<feature type="transmembrane region" description="Helical" evidence="2">
    <location>
        <begin position="8"/>
        <end position="28"/>
    </location>
</feature>
<feature type="transmembrane region" description="Helical" evidence="2">
    <location>
        <begin position="75"/>
        <end position="95"/>
    </location>
</feature>
<feature type="transmembrane region" description="Helical" evidence="2">
    <location>
        <begin position="107"/>
        <end position="127"/>
    </location>
</feature>
<feature type="transmembrane region" description="Helical" evidence="2">
    <location>
        <begin position="147"/>
        <end position="167"/>
    </location>
</feature>
<feature type="transmembrane region" description="Helical" evidence="2">
    <location>
        <begin position="178"/>
        <end position="198"/>
    </location>
</feature>
<feature type="transmembrane region" description="Helical" evidence="2">
    <location>
        <begin position="224"/>
        <end position="244"/>
    </location>
</feature>
<feature type="transmembrane region" description="Helical" evidence="2">
    <location>
        <begin position="266"/>
        <end position="286"/>
    </location>
</feature>
<feature type="transmembrane region" description="Helical" evidence="2">
    <location>
        <begin position="308"/>
        <end position="328"/>
    </location>
</feature>
<geneLocation type="mitochondrion"/>